<keyword id="KW-0001">2Fe-2S</keyword>
<keyword id="KW-0058">Aromatic hydrocarbons catabolism</keyword>
<keyword id="KW-0408">Iron</keyword>
<keyword id="KW-0411">Iron-sulfur</keyword>
<keyword id="KW-0479">Metal-binding</keyword>
<keyword id="KW-0560">Oxidoreductase</keyword>
<keyword id="KW-0614">Plasmid</keyword>
<dbReference type="EC" id="1.14.15.23" evidence="3"/>
<dbReference type="EMBL" id="KJ461679">
    <property type="protein sequence ID" value="AIA08943.1"/>
    <property type="molecule type" value="Genomic_DNA"/>
</dbReference>
<dbReference type="EMBL" id="CP021186">
    <property type="protein sequence ID" value="ARR57849.1"/>
    <property type="molecule type" value="Genomic_DNA"/>
</dbReference>
<dbReference type="SMR" id="A0A059WLZ7"/>
<dbReference type="KEGG" id="sphd:HY78_30640"/>
<dbReference type="BioCyc" id="MetaCyc:MONOMER-19784"/>
<dbReference type="BRENDA" id="1.14.15.23">
    <property type="organism ID" value="13073"/>
</dbReference>
<dbReference type="GO" id="GO:0051537">
    <property type="term" value="F:2 iron, 2 sulfur cluster binding"/>
    <property type="evidence" value="ECO:0007669"/>
    <property type="project" value="UniProtKB-KW"/>
</dbReference>
<dbReference type="GO" id="GO:0046872">
    <property type="term" value="F:metal ion binding"/>
    <property type="evidence" value="ECO:0007669"/>
    <property type="project" value="UniProtKB-KW"/>
</dbReference>
<dbReference type="GO" id="GO:0016491">
    <property type="term" value="F:oxidoreductase activity"/>
    <property type="evidence" value="ECO:0007669"/>
    <property type="project" value="UniProtKB-KW"/>
</dbReference>
<dbReference type="GO" id="GO:0009056">
    <property type="term" value="P:catabolic process"/>
    <property type="evidence" value="ECO:0007669"/>
    <property type="project" value="UniProtKB-KW"/>
</dbReference>
<dbReference type="CDD" id="cd08878">
    <property type="entry name" value="RHO_alpha_C_DMO-like"/>
    <property type="match status" value="1"/>
</dbReference>
<dbReference type="Gene3D" id="3.90.380.10">
    <property type="entry name" value="Naphthalene 1,2-dioxygenase Alpha Subunit, Chain A, domain 1"/>
    <property type="match status" value="1"/>
</dbReference>
<dbReference type="Gene3D" id="2.102.10.10">
    <property type="entry name" value="Rieske [2Fe-2S] iron-sulphur domain"/>
    <property type="match status" value="1"/>
</dbReference>
<dbReference type="InterPro" id="IPR050584">
    <property type="entry name" value="Cholesterol_7-desaturase"/>
</dbReference>
<dbReference type="InterPro" id="IPR017941">
    <property type="entry name" value="Rieske_2Fe-2S"/>
</dbReference>
<dbReference type="InterPro" id="IPR036922">
    <property type="entry name" value="Rieske_2Fe-2S_sf"/>
</dbReference>
<dbReference type="InterPro" id="IPR044043">
    <property type="entry name" value="VanA_C_cat"/>
</dbReference>
<dbReference type="PANTHER" id="PTHR21266:SF60">
    <property type="entry name" value="3-KETOSTEROID-9-ALPHA-MONOOXYGENASE, OXYGENASE COMPONENT"/>
    <property type="match status" value="1"/>
</dbReference>
<dbReference type="PANTHER" id="PTHR21266">
    <property type="entry name" value="IRON-SULFUR DOMAIN CONTAINING PROTEIN"/>
    <property type="match status" value="1"/>
</dbReference>
<dbReference type="Pfam" id="PF00355">
    <property type="entry name" value="Rieske"/>
    <property type="match status" value="1"/>
</dbReference>
<dbReference type="Pfam" id="PF19112">
    <property type="entry name" value="VanA_C"/>
    <property type="match status" value="1"/>
</dbReference>
<dbReference type="SUPFAM" id="SSF55961">
    <property type="entry name" value="Bet v1-like"/>
    <property type="match status" value="1"/>
</dbReference>
<dbReference type="SUPFAM" id="SSF50022">
    <property type="entry name" value="ISP domain"/>
    <property type="match status" value="1"/>
</dbReference>
<dbReference type="PROSITE" id="PS51296">
    <property type="entry name" value="RIESKE"/>
    <property type="match status" value="1"/>
</dbReference>
<gene>
    <name evidence="4" type="primary">cndA</name>
    <name evidence="5" type="ORF">HY78_30640</name>
</gene>
<geneLocation type="plasmid">
    <name>pDC05</name>
</geneLocation>
<name>CNDA_RHIWD</name>
<organism>
    <name type="scientific">Rhizorhabdus wittichii (strain DC-6 / KACC 16600)</name>
    <name type="common">Sphingomonas wittichii</name>
    <dbReference type="NCBI Taxonomy" id="1283312"/>
    <lineage>
        <taxon>Bacteria</taxon>
        <taxon>Pseudomonadati</taxon>
        <taxon>Pseudomonadota</taxon>
        <taxon>Alphaproteobacteria</taxon>
        <taxon>Sphingomonadales</taxon>
        <taxon>Sphingomonadaceae</taxon>
        <taxon>Rhizorhabdus</taxon>
    </lineage>
</organism>
<proteinExistence type="evidence at protein level"/>
<protein>
    <recommendedName>
        <fullName evidence="4">Chloroacetanilide N-alkylformylase, oxygenase component</fullName>
        <ecNumber evidence="3">1.14.15.23</ecNumber>
    </recommendedName>
    <alternativeName>
        <fullName evidence="4">Three-component Rieske non-heme iron oxygenase system</fullName>
        <shortName evidence="4">RHO</shortName>
    </alternativeName>
</protein>
<reference key="1">
    <citation type="journal article" date="2014" name="Appl. Environ. Microbiol.">
        <title>Novel three-component Rieske non-heme iron oxygenase system catalyzing the N-dealkylation of chloroacetanilide herbicides in sphingomonads DC-6 and DC-2.</title>
        <authorList>
            <person name="Chen Q."/>
            <person name="Wang C.H."/>
            <person name="Deng S.K."/>
            <person name="Wu Y.D."/>
            <person name="Li Y."/>
            <person name="Yao L."/>
            <person name="Jiang J.D."/>
            <person name="Yan X."/>
            <person name="He J."/>
            <person name="Li S.P."/>
        </authorList>
    </citation>
    <scope>NUCLEOTIDE SEQUENCE [LARGE SCALE GENOMIC DNA]</scope>
    <scope>FUNCTION</scope>
    <scope>CATALYTIC ACTIVITY</scope>
    <scope>ACTIVITY REGULATION</scope>
    <scope>BIOPHYSICOCHEMICAL PROPERTIES</scope>
    <scope>SUBSTRATE SPECIFICITY</scope>
    <scope>SUBUNIT</scope>
    <source>
        <strain>DC-6 / KACC 16600</strain>
        <plasmid evidence="5">pDC05</plasmid>
    </source>
</reference>
<reference key="2">
    <citation type="submission" date="2017-05" db="EMBL/GenBank/DDBJ databases">
        <title>Comparative genome analysis reveals the molecular basis of chloroacetanilide herbicide mineralization in Sphingomonas wittichii DC-6.</title>
        <authorList>
            <person name="Cheng M."/>
            <person name="Chen Q."/>
            <person name="Qiu J."/>
            <person name="Yan X."/>
            <person name="He J."/>
        </authorList>
    </citation>
    <scope>NUCLEOTIDE SEQUENCE [GENOMIC DNA]</scope>
    <source>
        <strain>DC-6 / KACC 16600</strain>
        <plasmid evidence="5">pDC05</plasmid>
    </source>
</reference>
<accession>A0A059WLZ7</accession>
<evidence type="ECO:0000250" key="1">
    <source>
        <dbReference type="UniProtKB" id="Q5S3I3"/>
    </source>
</evidence>
<evidence type="ECO:0000255" key="2">
    <source>
        <dbReference type="PROSITE-ProRule" id="PRU00628"/>
    </source>
</evidence>
<evidence type="ECO:0000269" key="3">
    <source>
    </source>
</evidence>
<evidence type="ECO:0000303" key="4">
    <source>
    </source>
</evidence>
<evidence type="ECO:0000312" key="5">
    <source>
        <dbReference type="EMBL" id="ARR57849.1"/>
    </source>
</evidence>
<comment type="function">
    <text evidence="3">Component of the chloroacetanilide N-alkylformylase multicomponent enzyme system involved in the degradation of chloroacetanilide herbicides (N-alkoxyalkyl-N-chloroacetyl-substituted aniline derivatives). In vitro, catalyzes the N-dealkylation of butachlor, alachlor and acetochlor to yield 2-chloro-N-(2,6-diethylphenyl)acetamide (CDEPA) (for alachlor and butachlor) and 2-chloro-N-(2-methyl-6-ethylphenyl)acetamide (CMEPA) (for acetochlor).</text>
</comment>
<comment type="catalytic activity">
    <reaction evidence="3">
        <text>butachlor + 2 reduced [2Fe-2S]-[ferredoxin] + O2 + 2 H(+) = butyl formate + N-(2,6-diethylphenyl)-2-chloroacetamide + 2 oxidized [2Fe-2S]-[ferredoxin] + H2O</text>
        <dbReference type="Rhea" id="RHEA:52204"/>
        <dbReference type="Rhea" id="RHEA-COMP:10000"/>
        <dbReference type="Rhea" id="RHEA-COMP:10001"/>
        <dbReference type="ChEBI" id="CHEBI:3230"/>
        <dbReference type="ChEBI" id="CHEBI:15377"/>
        <dbReference type="ChEBI" id="CHEBI:15378"/>
        <dbReference type="ChEBI" id="CHEBI:15379"/>
        <dbReference type="ChEBI" id="CHEBI:33737"/>
        <dbReference type="ChEBI" id="CHEBI:33738"/>
        <dbReference type="ChEBI" id="CHEBI:88514"/>
        <dbReference type="ChEBI" id="CHEBI:136492"/>
        <dbReference type="EC" id="1.14.15.23"/>
    </reaction>
</comment>
<comment type="catalytic activity">
    <reaction evidence="3">
        <text>alachlor + 2 reduced [2Fe-2S]-[ferredoxin] + O2 + 2 H(+) = methyl formate + N-(2,6-diethylphenyl)-2-chloroacetamide + 2 oxidized [2Fe-2S]-[ferredoxin] + H2O</text>
        <dbReference type="Rhea" id="RHEA:52208"/>
        <dbReference type="Rhea" id="RHEA-COMP:10000"/>
        <dbReference type="Rhea" id="RHEA-COMP:10001"/>
        <dbReference type="ChEBI" id="CHEBI:2533"/>
        <dbReference type="ChEBI" id="CHEBI:15377"/>
        <dbReference type="ChEBI" id="CHEBI:15378"/>
        <dbReference type="ChEBI" id="CHEBI:15379"/>
        <dbReference type="ChEBI" id="CHEBI:33737"/>
        <dbReference type="ChEBI" id="CHEBI:33738"/>
        <dbReference type="ChEBI" id="CHEBI:77699"/>
        <dbReference type="ChEBI" id="CHEBI:136492"/>
    </reaction>
</comment>
<comment type="catalytic activity">
    <reaction evidence="3">
        <text>acetochlor + 2 reduced [2Fe-2S]-[ferredoxin] + O2 + 2 H(+) = N-(2-ethyl-6-methylphenyl)-2-chloroacetamide + ethyl formate + 2 oxidized [2Fe-2S]-[ferredoxin] + H2O</text>
        <dbReference type="Rhea" id="RHEA:52212"/>
        <dbReference type="Rhea" id="RHEA-COMP:10000"/>
        <dbReference type="Rhea" id="RHEA-COMP:10001"/>
        <dbReference type="ChEBI" id="CHEBI:2394"/>
        <dbReference type="ChEBI" id="CHEBI:15377"/>
        <dbReference type="ChEBI" id="CHEBI:15378"/>
        <dbReference type="ChEBI" id="CHEBI:15379"/>
        <dbReference type="ChEBI" id="CHEBI:33737"/>
        <dbReference type="ChEBI" id="CHEBI:33738"/>
        <dbReference type="ChEBI" id="CHEBI:52342"/>
        <dbReference type="ChEBI" id="CHEBI:136494"/>
    </reaction>
</comment>
<comment type="cofactor">
    <cofactor evidence="1">
        <name>[2Fe-2S] cluster</name>
        <dbReference type="ChEBI" id="CHEBI:190135"/>
    </cofactor>
    <text evidence="1">Binds 1 [2Fe-2S] cluster per subunit.</text>
</comment>
<comment type="activity regulation">
    <text evidence="3">Activity enhanced by Fe(2+) and Mg(2+) ions. Divalent cations such as Ca(2+), Cr(2+), Co(2+), and Mn(2+) show moderate inhibition of the enzyme, whereas heavy metal ions such as Ag(+), Cu(2+), Pb(2+), Hg(2+), Ni(2+) and Zn(2+) severely inhibit the activity.</text>
</comment>
<comment type="biophysicochemical properties">
    <phDependence>
        <text evidence="3">Optimum pH is 7.</text>
    </phDependence>
    <temperatureDependence>
        <text evidence="3">Optimum temperature is 35 degrees Celsius.</text>
    </temperatureDependence>
</comment>
<comment type="subunit">
    <text evidence="3">The chloroacetanilide N-alkylformylase multicomponent enzyme system is composed of an oxygenase component (CndA) and an electron transfer component formed by a ferredoxin reductase (CndC1) and a ferredoxin (CndB1). In vitro, chloroacetanilide N-alkylformylase assays in which CndB1 is substituted for CndB2 demonstrate that the two enzymes possess nearly identical activities.</text>
</comment>
<feature type="chain" id="PRO_0000445251" description="Chloroacetanilide N-alkylformylase, oxygenase component">
    <location>
        <begin position="1"/>
        <end position="348"/>
    </location>
</feature>
<feature type="domain" description="Rieske" evidence="2">
    <location>
        <begin position="7"/>
        <end position="108"/>
    </location>
</feature>
<feature type="binding site" evidence="1">
    <location>
        <position position="47"/>
    </location>
    <ligand>
        <name>[2Fe-2S] cluster</name>
        <dbReference type="ChEBI" id="CHEBI:190135"/>
    </ligand>
</feature>
<feature type="binding site" evidence="1">
    <location>
        <position position="49"/>
    </location>
    <ligand>
        <name>[2Fe-2S] cluster</name>
        <dbReference type="ChEBI" id="CHEBI:190135"/>
    </ligand>
</feature>
<feature type="binding site" evidence="1">
    <location>
        <position position="66"/>
    </location>
    <ligand>
        <name>[2Fe-2S] cluster</name>
        <dbReference type="ChEBI" id="CHEBI:190135"/>
    </ligand>
</feature>
<feature type="binding site" evidence="1">
    <location>
        <position position="69"/>
    </location>
    <ligand>
        <name>[2Fe-2S] cluster</name>
        <dbReference type="ChEBI" id="CHEBI:190135"/>
    </ligand>
</feature>
<feature type="binding site" evidence="1">
    <location>
        <position position="159"/>
    </location>
    <ligand>
        <name>Fe cation</name>
        <dbReference type="ChEBI" id="CHEBI:24875"/>
    </ligand>
</feature>
<feature type="binding site" evidence="1">
    <location>
        <position position="164"/>
    </location>
    <ligand>
        <name>Fe cation</name>
        <dbReference type="ChEBI" id="CHEBI:24875"/>
    </ligand>
</feature>
<feature type="binding site" evidence="1">
    <location>
        <position position="250"/>
    </location>
    <ligand>
        <name>substrate</name>
    </ligand>
</feature>
<feature type="binding site" evidence="1">
    <location>
        <position position="293"/>
    </location>
    <ligand>
        <name>Fe cation</name>
        <dbReference type="ChEBI" id="CHEBI:24875"/>
    </ligand>
</feature>
<feature type="site" description="Plays a role in the stabilization the metal coordination" evidence="1">
    <location>
        <position position="153"/>
    </location>
</feature>
<sequence>MFLQNAWYAVAWCDEVTDGIVTRKVLGRELALFRDGEGQPRAILNRCPHRFAPLSLGKRIGDAIQCPYHGLHFGPDGRCVHNPHGDGVVPDVATPTFPARERHKLIWAWMGDPALATDDIAGGEYGYLDDVELDLLPRGHLHLDCDYRLVIDNLMDPAHVAVLHDSALASEALIRAVPRVWREEDVIRVESWAPDSKPSFLFGAWLGNHDDPVDHWVASRWQAAGLLSVEGGVVAVGGDREDGLRVRGAHMITPETETSAHYFWAVVRNFREDDAEQSEQIRATTAAIFTGEDKWMLEAIERSMDGEEFWSLRPAILGTDRAAVMVRRALESEIKAEGRPKVVAVSAG</sequence>